<reference key="1">
    <citation type="book" date="2006" name="Gram positive pathogens, 2nd edition">
        <title>The Staphylococcus aureus NCTC 8325 genome.</title>
        <editorList>
            <person name="Fischetti V."/>
            <person name="Novick R."/>
            <person name="Ferretti J."/>
            <person name="Portnoy D."/>
            <person name="Rood J."/>
        </editorList>
        <authorList>
            <person name="Gillaspy A.F."/>
            <person name="Worrell V."/>
            <person name="Orvis J."/>
            <person name="Roe B.A."/>
            <person name="Dyer D.W."/>
            <person name="Iandolo J.J."/>
        </authorList>
    </citation>
    <scope>NUCLEOTIDE SEQUENCE [LARGE SCALE GENOMIC DNA]</scope>
    <source>
        <strain>NCTC 8325 / PS 47</strain>
    </source>
</reference>
<proteinExistence type="evidence at protein level"/>
<dbReference type="EC" id="3.1.2.-" evidence="1"/>
<dbReference type="EC" id="3.5.1.-" evidence="1"/>
<dbReference type="EC" id="3.5.1.124" evidence="1"/>
<dbReference type="EMBL" id="CP000253">
    <property type="protein sequence ID" value="ABD29681.1"/>
    <property type="molecule type" value="Genomic_DNA"/>
</dbReference>
<dbReference type="RefSeq" id="WP_000076404.1">
    <property type="nucleotide sequence ID" value="NZ_LS483365.1"/>
</dbReference>
<dbReference type="RefSeq" id="YP_499105.1">
    <property type="nucleotide sequence ID" value="NC_007795.1"/>
</dbReference>
<dbReference type="PDB" id="5XR2">
    <property type="method" value="X-ray"/>
    <property type="resolution" value="2.60 A"/>
    <property type="chains" value="A/B/C/D/E/F/G/H=1-292"/>
</dbReference>
<dbReference type="PDB" id="5XR3">
    <property type="method" value="X-ray"/>
    <property type="resolution" value="3.01 A"/>
    <property type="chains" value="A/B/C/D/E/F/G/H=1-292"/>
</dbReference>
<dbReference type="PDBsum" id="5XR2"/>
<dbReference type="PDBsum" id="5XR3"/>
<dbReference type="SMR" id="Q2G0M7"/>
<dbReference type="STRING" id="93061.SAOUHSC_00533"/>
<dbReference type="MEROPS" id="C56.006"/>
<dbReference type="PaxDb" id="1280-SAXN108_0605"/>
<dbReference type="GeneID" id="3920386"/>
<dbReference type="KEGG" id="sao:SAOUHSC_00533"/>
<dbReference type="PATRIC" id="fig|93061.5.peg.479"/>
<dbReference type="eggNOG" id="COG0693">
    <property type="taxonomic scope" value="Bacteria"/>
</dbReference>
<dbReference type="HOGENOM" id="CLU_066933_0_0_9"/>
<dbReference type="OrthoDB" id="9792284at2"/>
<dbReference type="PRO" id="PR:Q2G0M7"/>
<dbReference type="Proteomes" id="UP000008816">
    <property type="component" value="Chromosome"/>
</dbReference>
<dbReference type="GO" id="GO:0005737">
    <property type="term" value="C:cytoplasm"/>
    <property type="evidence" value="ECO:0000318"/>
    <property type="project" value="GO_Central"/>
</dbReference>
<dbReference type="GO" id="GO:0019172">
    <property type="term" value="F:glyoxalase III activity"/>
    <property type="evidence" value="ECO:0000318"/>
    <property type="project" value="GO_Central"/>
</dbReference>
<dbReference type="GO" id="GO:0036524">
    <property type="term" value="F:protein deglycase activity"/>
    <property type="evidence" value="ECO:0007669"/>
    <property type="project" value="UniProtKB-UniRule"/>
</dbReference>
<dbReference type="GO" id="GO:0016790">
    <property type="term" value="F:thiolester hydrolase activity"/>
    <property type="evidence" value="ECO:0007669"/>
    <property type="project" value="UniProtKB-UniRule"/>
</dbReference>
<dbReference type="GO" id="GO:0006281">
    <property type="term" value="P:DNA repair"/>
    <property type="evidence" value="ECO:0007669"/>
    <property type="project" value="UniProtKB-UniRule"/>
</dbReference>
<dbReference type="GO" id="GO:0019243">
    <property type="term" value="P:methylglyoxal catabolic process to D-lactate via S-lactoyl-glutathione"/>
    <property type="evidence" value="ECO:0000318"/>
    <property type="project" value="GO_Central"/>
</dbReference>
<dbReference type="GO" id="GO:0030091">
    <property type="term" value="P:protein repair"/>
    <property type="evidence" value="ECO:0007669"/>
    <property type="project" value="UniProtKB-UniRule"/>
</dbReference>
<dbReference type="CDD" id="cd03148">
    <property type="entry name" value="GATase1_EcHsp31_like"/>
    <property type="match status" value="1"/>
</dbReference>
<dbReference type="Gene3D" id="3.40.50.880">
    <property type="match status" value="1"/>
</dbReference>
<dbReference type="HAMAP" id="MF_01046">
    <property type="entry name" value="Deglycase_HchA"/>
    <property type="match status" value="1"/>
</dbReference>
<dbReference type="InterPro" id="IPR029062">
    <property type="entry name" value="Class_I_gatase-like"/>
</dbReference>
<dbReference type="InterPro" id="IPR002818">
    <property type="entry name" value="DJ-1/PfpI"/>
</dbReference>
<dbReference type="InterPro" id="IPR017283">
    <property type="entry name" value="HchA"/>
</dbReference>
<dbReference type="InterPro" id="IPR050325">
    <property type="entry name" value="Prot/Nucl_acid_deglycase"/>
</dbReference>
<dbReference type="NCBIfam" id="NF003168">
    <property type="entry name" value="PRK04155.1"/>
    <property type="match status" value="1"/>
</dbReference>
<dbReference type="PANTHER" id="PTHR48094">
    <property type="entry name" value="PROTEIN/NUCLEIC ACID DEGLYCASE DJ-1-RELATED"/>
    <property type="match status" value="1"/>
</dbReference>
<dbReference type="PANTHER" id="PTHR48094:SF20">
    <property type="entry name" value="PROTEIN_NUCLEIC ACID DEGLYCASE 1"/>
    <property type="match status" value="1"/>
</dbReference>
<dbReference type="Pfam" id="PF01965">
    <property type="entry name" value="DJ-1_PfpI"/>
    <property type="match status" value="1"/>
</dbReference>
<dbReference type="PIRSF" id="PIRSF037798">
    <property type="entry name" value="Chaperone_HchA"/>
    <property type="match status" value="1"/>
</dbReference>
<dbReference type="SUPFAM" id="SSF52317">
    <property type="entry name" value="Class I glutamine amidotransferase-like"/>
    <property type="match status" value="1"/>
</dbReference>
<evidence type="ECO:0000255" key="1">
    <source>
        <dbReference type="HAMAP-Rule" id="MF_01046"/>
    </source>
</evidence>
<evidence type="ECO:0000256" key="2">
    <source>
        <dbReference type="SAM" id="MobiDB-lite"/>
    </source>
</evidence>
<name>HCHA_STAA8</name>
<keyword id="KW-0002">3D-structure</keyword>
<keyword id="KW-0963">Cytoplasm</keyword>
<keyword id="KW-0227">DNA damage</keyword>
<keyword id="KW-0234">DNA repair</keyword>
<keyword id="KW-0378">Hydrolase</keyword>
<keyword id="KW-1185">Reference proteome</keyword>
<keyword id="KW-0346">Stress response</keyword>
<sequence>MSQDVNELSKQPTPDKAEDNAFFPSPYSLSQYTAPKTDFDGVEHKGAYKDGKWKVLMIAAEERYVLLENGKMFSTGNHPVEMLLPLHHLMEAGFDVDVATLSGYPVKLELWAMPTEDEAVISTYNKLKEKLKQPKKLADVIKNELGPDSDYLSVFIPGGHAAVVGISESEDVQQTLDWALDNDRFIVTLCHGPAALLSAGLNREKSPLEGYSVCVFPDSLDEGANIEIGYLPGRLKWLVADLLTKQGLKVVNDDMTGRTLKDRKLLTGDSPLASNELGKLAVNEMLNAIQNK</sequence>
<protein>
    <recommendedName>
        <fullName evidence="1">Protein/nucleic acid deglycase HchA</fullName>
        <ecNumber evidence="1">3.1.2.-</ecNumber>
        <ecNumber evidence="1">3.5.1.-</ecNumber>
        <ecNumber evidence="1">3.5.1.124</ecNumber>
    </recommendedName>
    <alternativeName>
        <fullName evidence="1">Maillard deglycase</fullName>
    </alternativeName>
</protein>
<feature type="chain" id="PRO_1000064284" description="Protein/nucleic acid deglycase HchA">
    <location>
        <begin position="1"/>
        <end position="292"/>
    </location>
</feature>
<feature type="region of interest" description="Disordered" evidence="2">
    <location>
        <begin position="1"/>
        <end position="23"/>
    </location>
</feature>
<feature type="compositionally biased region" description="Polar residues" evidence="2">
    <location>
        <begin position="1"/>
        <end position="12"/>
    </location>
</feature>
<feature type="active site" description="Nucleophile" evidence="1">
    <location>
        <position position="190"/>
    </location>
</feature>
<accession>Q2G0M7</accession>
<organism>
    <name type="scientific">Staphylococcus aureus (strain NCTC 8325 / PS 47)</name>
    <dbReference type="NCBI Taxonomy" id="93061"/>
    <lineage>
        <taxon>Bacteria</taxon>
        <taxon>Bacillati</taxon>
        <taxon>Bacillota</taxon>
        <taxon>Bacilli</taxon>
        <taxon>Bacillales</taxon>
        <taxon>Staphylococcaceae</taxon>
        <taxon>Staphylococcus</taxon>
    </lineage>
</organism>
<comment type="function">
    <text evidence="1">Protein and nucleotide deglycase that catalyzes the deglycation of the Maillard adducts formed between amino groups of proteins or nucleotides and reactive carbonyl groups of glyoxals. Thus, functions as a protein deglycase that repairs methylglyoxal- and glyoxal-glycated proteins, and releases repaired proteins and lactate or glycolate, respectively. Deglycates cysteine, arginine and lysine residues in proteins, and thus reactivates these proteins by reversing glycation by glyoxals. Acts on early glycation intermediates (hemithioacetals and aminocarbinols), preventing the formation of Schiff bases and advanced glycation endproducts (AGE). Also functions as a nucleotide deglycase able to repair glycated guanine in the free nucleotide pool (GTP, GDP, GMP, dGTP) and in DNA and RNA. Is thus involved in a major nucleotide repair system named guanine glycation repair (GG repair), dedicated to reversing methylglyoxal and glyoxal damage via nucleotide sanitization and direct nucleic acid repair. Plays an important role in protecting cells from carbonyl stress.</text>
</comment>
<comment type="catalytic activity">
    <reaction evidence="1">
        <text>N(omega)-(1-hydroxy-2-oxopropyl)-L-arginyl-[protein] + H2O = lactate + L-arginyl-[protein] + H(+)</text>
        <dbReference type="Rhea" id="RHEA:49548"/>
        <dbReference type="Rhea" id="RHEA-COMP:10532"/>
        <dbReference type="Rhea" id="RHEA-COMP:12428"/>
        <dbReference type="ChEBI" id="CHEBI:15377"/>
        <dbReference type="ChEBI" id="CHEBI:15378"/>
        <dbReference type="ChEBI" id="CHEBI:24996"/>
        <dbReference type="ChEBI" id="CHEBI:29965"/>
        <dbReference type="ChEBI" id="CHEBI:131708"/>
        <dbReference type="EC" id="3.5.1.124"/>
    </reaction>
</comment>
<comment type="catalytic activity">
    <reaction evidence="1">
        <text>N(6)-(1-hydroxy-2-oxopropyl)-L-lysyl-[protein] + H2O = lactate + L-lysyl-[protein] + H(+)</text>
        <dbReference type="Rhea" id="RHEA:49552"/>
        <dbReference type="Rhea" id="RHEA-COMP:9752"/>
        <dbReference type="Rhea" id="RHEA-COMP:12429"/>
        <dbReference type="ChEBI" id="CHEBI:15377"/>
        <dbReference type="ChEBI" id="CHEBI:15378"/>
        <dbReference type="ChEBI" id="CHEBI:24996"/>
        <dbReference type="ChEBI" id="CHEBI:29969"/>
        <dbReference type="ChEBI" id="CHEBI:131709"/>
        <dbReference type="EC" id="3.5.1.124"/>
    </reaction>
</comment>
<comment type="catalytic activity">
    <reaction evidence="1">
        <text>S-(1-hydroxy-2-oxopropyl)-L-cysteinyl-[protein] + H2O = lactate + L-cysteinyl-[protein] + H(+)</text>
        <dbReference type="Rhea" id="RHEA:49556"/>
        <dbReference type="Rhea" id="RHEA-COMP:10131"/>
        <dbReference type="Rhea" id="RHEA-COMP:12430"/>
        <dbReference type="ChEBI" id="CHEBI:15377"/>
        <dbReference type="ChEBI" id="CHEBI:15378"/>
        <dbReference type="ChEBI" id="CHEBI:24996"/>
        <dbReference type="ChEBI" id="CHEBI:29950"/>
        <dbReference type="ChEBI" id="CHEBI:131710"/>
        <dbReference type="EC" id="3.5.1.124"/>
    </reaction>
</comment>
<comment type="catalytic activity">
    <reaction evidence="1">
        <text>N(omega)-(1-hydroxy-2-oxoethyl)-L-arginyl-[protein] + H2O = L-arginyl-[protein] + glycolate + H(+)</text>
        <dbReference type="Rhea" id="RHEA:57188"/>
        <dbReference type="Rhea" id="RHEA-COMP:10532"/>
        <dbReference type="Rhea" id="RHEA-COMP:14844"/>
        <dbReference type="ChEBI" id="CHEBI:15377"/>
        <dbReference type="ChEBI" id="CHEBI:15378"/>
        <dbReference type="ChEBI" id="CHEBI:29805"/>
        <dbReference type="ChEBI" id="CHEBI:29965"/>
        <dbReference type="ChEBI" id="CHEBI:141553"/>
        <dbReference type="EC" id="3.5.1.124"/>
    </reaction>
</comment>
<comment type="catalytic activity">
    <reaction evidence="1">
        <text>N(6)-(1-hydroxy-2-oxoethyl)-L-lysyl-[protein] + H2O = glycolate + L-lysyl-[protein] + H(+)</text>
        <dbReference type="Rhea" id="RHEA:57192"/>
        <dbReference type="Rhea" id="RHEA-COMP:9752"/>
        <dbReference type="Rhea" id="RHEA-COMP:14845"/>
        <dbReference type="ChEBI" id="CHEBI:15377"/>
        <dbReference type="ChEBI" id="CHEBI:15378"/>
        <dbReference type="ChEBI" id="CHEBI:29805"/>
        <dbReference type="ChEBI" id="CHEBI:29969"/>
        <dbReference type="ChEBI" id="CHEBI:141554"/>
        <dbReference type="EC" id="3.5.1.124"/>
    </reaction>
</comment>
<comment type="catalytic activity">
    <reaction evidence="1">
        <text>S-(1-hydroxy-2-oxoethyl)-L-cysteinyl-[protein] + H2O = glycolate + L-cysteinyl-[protein] + H(+)</text>
        <dbReference type="Rhea" id="RHEA:57196"/>
        <dbReference type="Rhea" id="RHEA-COMP:10131"/>
        <dbReference type="Rhea" id="RHEA-COMP:14846"/>
        <dbReference type="ChEBI" id="CHEBI:15377"/>
        <dbReference type="ChEBI" id="CHEBI:15378"/>
        <dbReference type="ChEBI" id="CHEBI:29805"/>
        <dbReference type="ChEBI" id="CHEBI:29950"/>
        <dbReference type="ChEBI" id="CHEBI:141555"/>
        <dbReference type="EC" id="3.5.1.124"/>
    </reaction>
</comment>
<comment type="catalytic activity">
    <reaction evidence="1">
        <text>N(2)-(1-hydroxy-2-oxopropyl)-dGTP + H2O = lactate + dGTP + H(+)</text>
        <dbReference type="Rhea" id="RHEA:57244"/>
        <dbReference type="ChEBI" id="CHEBI:15377"/>
        <dbReference type="ChEBI" id="CHEBI:15378"/>
        <dbReference type="ChEBI" id="CHEBI:24996"/>
        <dbReference type="ChEBI" id="CHEBI:61429"/>
        <dbReference type="ChEBI" id="CHEBI:141569"/>
    </reaction>
</comment>
<comment type="catalytic activity">
    <reaction evidence="1">
        <text>N(2)-(1-hydroxy-2-oxopropyl)-GTP + H2O = lactate + GTP + H(+)</text>
        <dbReference type="Rhea" id="RHEA:57256"/>
        <dbReference type="ChEBI" id="CHEBI:15377"/>
        <dbReference type="ChEBI" id="CHEBI:15378"/>
        <dbReference type="ChEBI" id="CHEBI:24996"/>
        <dbReference type="ChEBI" id="CHEBI:37565"/>
        <dbReference type="ChEBI" id="CHEBI:141570"/>
    </reaction>
</comment>
<comment type="catalytic activity">
    <reaction evidence="1">
        <text>N(2)-(1-hydroxy-2-oxopropyl)-GDP + H2O = lactate + GDP + H(+)</text>
        <dbReference type="Rhea" id="RHEA:57260"/>
        <dbReference type="ChEBI" id="CHEBI:15377"/>
        <dbReference type="ChEBI" id="CHEBI:15378"/>
        <dbReference type="ChEBI" id="CHEBI:24996"/>
        <dbReference type="ChEBI" id="CHEBI:58189"/>
        <dbReference type="ChEBI" id="CHEBI:141573"/>
    </reaction>
</comment>
<comment type="catalytic activity">
    <reaction evidence="1">
        <text>N(2)-(1-hydroxy-2-oxopropyl)-GMP + H2O = lactate + GMP + H(+)</text>
        <dbReference type="Rhea" id="RHEA:57268"/>
        <dbReference type="ChEBI" id="CHEBI:15377"/>
        <dbReference type="ChEBI" id="CHEBI:15378"/>
        <dbReference type="ChEBI" id="CHEBI:24996"/>
        <dbReference type="ChEBI" id="CHEBI:58115"/>
        <dbReference type="ChEBI" id="CHEBI:141575"/>
    </reaction>
</comment>
<comment type="catalytic activity">
    <reaction evidence="1">
        <text>N(2)-(1-hydroxy-2-oxoethyl)-dGTP + H2O = dGTP + glycolate + H(+)</text>
        <dbReference type="Rhea" id="RHEA:57248"/>
        <dbReference type="ChEBI" id="CHEBI:15377"/>
        <dbReference type="ChEBI" id="CHEBI:15378"/>
        <dbReference type="ChEBI" id="CHEBI:29805"/>
        <dbReference type="ChEBI" id="CHEBI:61429"/>
        <dbReference type="ChEBI" id="CHEBI:141572"/>
    </reaction>
</comment>
<comment type="catalytic activity">
    <reaction evidence="1">
        <text>N(2)-(1-hydroxy-2-oxoethyl)-GTP + H2O = glycolate + GTP + H(+)</text>
        <dbReference type="Rhea" id="RHEA:57252"/>
        <dbReference type="ChEBI" id="CHEBI:15377"/>
        <dbReference type="ChEBI" id="CHEBI:15378"/>
        <dbReference type="ChEBI" id="CHEBI:29805"/>
        <dbReference type="ChEBI" id="CHEBI:37565"/>
        <dbReference type="ChEBI" id="CHEBI:141571"/>
    </reaction>
</comment>
<comment type="catalytic activity">
    <reaction evidence="1">
        <text>N(2)-(1-hydroxy-2-oxoethyl)-GDP + H2O = glycolate + GDP + H(+)</text>
        <dbReference type="Rhea" id="RHEA:57264"/>
        <dbReference type="ChEBI" id="CHEBI:15377"/>
        <dbReference type="ChEBI" id="CHEBI:15378"/>
        <dbReference type="ChEBI" id="CHEBI:29805"/>
        <dbReference type="ChEBI" id="CHEBI:58189"/>
        <dbReference type="ChEBI" id="CHEBI:141574"/>
    </reaction>
</comment>
<comment type="catalytic activity">
    <reaction evidence="1">
        <text>N(2)-(1-hydroxy-2-oxoethyl)-GMP + H2O = glycolate + GMP + H(+)</text>
        <dbReference type="Rhea" id="RHEA:57304"/>
        <dbReference type="ChEBI" id="CHEBI:15377"/>
        <dbReference type="ChEBI" id="CHEBI:15378"/>
        <dbReference type="ChEBI" id="CHEBI:29805"/>
        <dbReference type="ChEBI" id="CHEBI:58115"/>
        <dbReference type="ChEBI" id="CHEBI:141576"/>
    </reaction>
</comment>
<comment type="catalytic activity">
    <reaction evidence="1">
        <text>an N(2)-(1-hydroxy-2-oxopropyl)-guanosine in RNA + H2O = a guanosine in RNA + lactate + H(+)</text>
        <dbReference type="Rhea" id="RHEA:57288"/>
        <dbReference type="Rhea" id="RHEA-COMP:14855"/>
        <dbReference type="Rhea" id="RHEA-COMP:14858"/>
        <dbReference type="ChEBI" id="CHEBI:15377"/>
        <dbReference type="ChEBI" id="CHEBI:15378"/>
        <dbReference type="ChEBI" id="CHEBI:24996"/>
        <dbReference type="ChEBI" id="CHEBI:74269"/>
        <dbReference type="ChEBI" id="CHEBI:141580"/>
    </reaction>
</comment>
<comment type="catalytic activity">
    <reaction evidence="1">
        <text>an N(2)-(1-hydroxy-2-oxopropyl)-2'-deoxyguanosine in DNA + H2O = a 2'-deoxyguanosine in DNA + lactate + H(+)</text>
        <dbReference type="Rhea" id="RHEA:57300"/>
        <dbReference type="Rhea" id="RHEA-COMP:11367"/>
        <dbReference type="Rhea" id="RHEA-COMP:14856"/>
        <dbReference type="ChEBI" id="CHEBI:15377"/>
        <dbReference type="ChEBI" id="CHEBI:15378"/>
        <dbReference type="ChEBI" id="CHEBI:24996"/>
        <dbReference type="ChEBI" id="CHEBI:85445"/>
        <dbReference type="ChEBI" id="CHEBI:141578"/>
    </reaction>
</comment>
<comment type="catalytic activity">
    <reaction evidence="1">
        <text>an N(2)-(1-hydroxy-2-oxoethyl)-guanosine in RNA + H2O = a guanosine in RNA + glycolate + H(+)</text>
        <dbReference type="Rhea" id="RHEA:57292"/>
        <dbReference type="Rhea" id="RHEA-COMP:14855"/>
        <dbReference type="Rhea" id="RHEA-COMP:14859"/>
        <dbReference type="ChEBI" id="CHEBI:15377"/>
        <dbReference type="ChEBI" id="CHEBI:15378"/>
        <dbReference type="ChEBI" id="CHEBI:29805"/>
        <dbReference type="ChEBI" id="CHEBI:74269"/>
        <dbReference type="ChEBI" id="CHEBI:141581"/>
    </reaction>
</comment>
<comment type="catalytic activity">
    <reaction evidence="1">
        <text>an N(2)-(1-hydroxy-2-oxoethyl)-2'-deoxyguanosine in DNA + H2O = a 2'-deoxyguanosine in DNA + glycolate + H(+)</text>
        <dbReference type="Rhea" id="RHEA:57296"/>
        <dbReference type="Rhea" id="RHEA-COMP:11367"/>
        <dbReference type="Rhea" id="RHEA-COMP:14857"/>
        <dbReference type="ChEBI" id="CHEBI:15377"/>
        <dbReference type="ChEBI" id="CHEBI:15378"/>
        <dbReference type="ChEBI" id="CHEBI:29805"/>
        <dbReference type="ChEBI" id="CHEBI:85445"/>
        <dbReference type="ChEBI" id="CHEBI:141579"/>
    </reaction>
</comment>
<comment type="subcellular location">
    <subcellularLocation>
        <location evidence="1">Cytoplasm</location>
    </subcellularLocation>
</comment>
<comment type="similarity">
    <text evidence="1">Belongs to the peptidase C56 family. HchA subfamily.</text>
</comment>
<gene>
    <name evidence="1" type="primary">hchA</name>
    <name type="ordered locus">SAOUHSC_00533</name>
</gene>